<dbReference type="EC" id="7.1.1.-" evidence="2"/>
<dbReference type="EMBL" id="AL646052">
    <property type="protein sequence ID" value="CAD15768.1"/>
    <property type="molecule type" value="Genomic_DNA"/>
</dbReference>
<dbReference type="RefSeq" id="WP_003261929.1">
    <property type="nucleotide sequence ID" value="NC_003295.1"/>
</dbReference>
<dbReference type="SMR" id="Q8XXQ2"/>
<dbReference type="STRING" id="267608.RSc2061"/>
<dbReference type="EnsemblBacteria" id="CAD15768">
    <property type="protein sequence ID" value="CAD15768"/>
    <property type="gene ID" value="RSc2061"/>
</dbReference>
<dbReference type="KEGG" id="rso:RSc2061"/>
<dbReference type="eggNOG" id="COG0377">
    <property type="taxonomic scope" value="Bacteria"/>
</dbReference>
<dbReference type="HOGENOM" id="CLU_055737_7_3_4"/>
<dbReference type="Proteomes" id="UP000001436">
    <property type="component" value="Chromosome"/>
</dbReference>
<dbReference type="GO" id="GO:0005886">
    <property type="term" value="C:plasma membrane"/>
    <property type="evidence" value="ECO:0007669"/>
    <property type="project" value="UniProtKB-SubCell"/>
</dbReference>
<dbReference type="GO" id="GO:0045271">
    <property type="term" value="C:respiratory chain complex I"/>
    <property type="evidence" value="ECO:0007669"/>
    <property type="project" value="TreeGrafter"/>
</dbReference>
<dbReference type="GO" id="GO:0051539">
    <property type="term" value="F:4 iron, 4 sulfur cluster binding"/>
    <property type="evidence" value="ECO:0007669"/>
    <property type="project" value="UniProtKB-KW"/>
</dbReference>
<dbReference type="GO" id="GO:0005506">
    <property type="term" value="F:iron ion binding"/>
    <property type="evidence" value="ECO:0007669"/>
    <property type="project" value="UniProtKB-UniRule"/>
</dbReference>
<dbReference type="GO" id="GO:0008137">
    <property type="term" value="F:NADH dehydrogenase (ubiquinone) activity"/>
    <property type="evidence" value="ECO:0007669"/>
    <property type="project" value="InterPro"/>
</dbReference>
<dbReference type="GO" id="GO:0050136">
    <property type="term" value="F:NADH:ubiquinone reductase (non-electrogenic) activity"/>
    <property type="evidence" value="ECO:0007669"/>
    <property type="project" value="UniProtKB-UniRule"/>
</dbReference>
<dbReference type="GO" id="GO:0048038">
    <property type="term" value="F:quinone binding"/>
    <property type="evidence" value="ECO:0007669"/>
    <property type="project" value="UniProtKB-KW"/>
</dbReference>
<dbReference type="GO" id="GO:0009060">
    <property type="term" value="P:aerobic respiration"/>
    <property type="evidence" value="ECO:0007669"/>
    <property type="project" value="TreeGrafter"/>
</dbReference>
<dbReference type="GO" id="GO:0015990">
    <property type="term" value="P:electron transport coupled proton transport"/>
    <property type="evidence" value="ECO:0007669"/>
    <property type="project" value="TreeGrafter"/>
</dbReference>
<dbReference type="FunFam" id="3.40.50.12280:FF:000001">
    <property type="entry name" value="NADH-quinone oxidoreductase subunit B 2"/>
    <property type="match status" value="1"/>
</dbReference>
<dbReference type="Gene3D" id="3.40.50.12280">
    <property type="match status" value="1"/>
</dbReference>
<dbReference type="HAMAP" id="MF_01356">
    <property type="entry name" value="NDH1_NuoB"/>
    <property type="match status" value="1"/>
</dbReference>
<dbReference type="InterPro" id="IPR006137">
    <property type="entry name" value="NADH_UbQ_OxRdtase-like_20kDa"/>
</dbReference>
<dbReference type="InterPro" id="IPR006138">
    <property type="entry name" value="NADH_UQ_OxRdtase_20Kd_su"/>
</dbReference>
<dbReference type="NCBIfam" id="TIGR01957">
    <property type="entry name" value="nuoB_fam"/>
    <property type="match status" value="1"/>
</dbReference>
<dbReference type="NCBIfam" id="NF005012">
    <property type="entry name" value="PRK06411.1"/>
    <property type="match status" value="1"/>
</dbReference>
<dbReference type="PANTHER" id="PTHR11995">
    <property type="entry name" value="NADH DEHYDROGENASE"/>
    <property type="match status" value="1"/>
</dbReference>
<dbReference type="PANTHER" id="PTHR11995:SF14">
    <property type="entry name" value="NADH DEHYDROGENASE [UBIQUINONE] IRON-SULFUR PROTEIN 7, MITOCHONDRIAL"/>
    <property type="match status" value="1"/>
</dbReference>
<dbReference type="Pfam" id="PF01058">
    <property type="entry name" value="Oxidored_q6"/>
    <property type="match status" value="1"/>
</dbReference>
<dbReference type="SUPFAM" id="SSF56770">
    <property type="entry name" value="HydA/Nqo6-like"/>
    <property type="match status" value="1"/>
</dbReference>
<dbReference type="PROSITE" id="PS01150">
    <property type="entry name" value="COMPLEX1_20K"/>
    <property type="match status" value="1"/>
</dbReference>
<organism>
    <name type="scientific">Ralstonia nicotianae (strain ATCC BAA-1114 / GMI1000)</name>
    <name type="common">Ralstonia solanacearum</name>
    <dbReference type="NCBI Taxonomy" id="267608"/>
    <lineage>
        <taxon>Bacteria</taxon>
        <taxon>Pseudomonadati</taxon>
        <taxon>Pseudomonadota</taxon>
        <taxon>Betaproteobacteria</taxon>
        <taxon>Burkholderiales</taxon>
        <taxon>Burkholderiaceae</taxon>
        <taxon>Ralstonia</taxon>
        <taxon>Ralstonia solanacearum species complex</taxon>
    </lineage>
</organism>
<comment type="function">
    <text evidence="1">NDH-1 shuttles electrons from NADH, via FMN and iron-sulfur (Fe-S) centers, to quinones in the respiratory chain. Couples the redox reaction to proton translocation (for every two electrons transferred, four hydrogen ions are translocated across the cytoplasmic membrane), and thus conserves the redox energy in a proton gradient (By similarity).</text>
</comment>
<comment type="catalytic activity">
    <reaction evidence="2">
        <text>a quinone + NADH + 5 H(+)(in) = a quinol + NAD(+) + 4 H(+)(out)</text>
        <dbReference type="Rhea" id="RHEA:57888"/>
        <dbReference type="ChEBI" id="CHEBI:15378"/>
        <dbReference type="ChEBI" id="CHEBI:24646"/>
        <dbReference type="ChEBI" id="CHEBI:57540"/>
        <dbReference type="ChEBI" id="CHEBI:57945"/>
        <dbReference type="ChEBI" id="CHEBI:132124"/>
    </reaction>
</comment>
<comment type="cofactor">
    <cofactor evidence="2">
        <name>[4Fe-4S] cluster</name>
        <dbReference type="ChEBI" id="CHEBI:49883"/>
    </cofactor>
    <text evidence="2">Binds 1 [4Fe-4S] cluster.</text>
</comment>
<comment type="subunit">
    <text evidence="2">NDH-1 is composed of 14 different subunits. Subunits NuoB, C, D, E, F, and G constitute the peripheral sector of the complex.</text>
</comment>
<comment type="subcellular location">
    <subcellularLocation>
        <location evidence="2">Cell inner membrane</location>
        <topology evidence="2">Peripheral membrane protein</topology>
        <orientation evidence="2">Cytoplasmic side</orientation>
    </subcellularLocation>
</comment>
<comment type="similarity">
    <text evidence="2">Belongs to the complex I 20 kDa subunit family.</text>
</comment>
<reference key="1">
    <citation type="journal article" date="2002" name="Nature">
        <title>Genome sequence of the plant pathogen Ralstonia solanacearum.</title>
        <authorList>
            <person name="Salanoubat M."/>
            <person name="Genin S."/>
            <person name="Artiguenave F."/>
            <person name="Gouzy J."/>
            <person name="Mangenot S."/>
            <person name="Arlat M."/>
            <person name="Billault A."/>
            <person name="Brottier P."/>
            <person name="Camus J.-C."/>
            <person name="Cattolico L."/>
            <person name="Chandler M."/>
            <person name="Choisne N."/>
            <person name="Claudel-Renard C."/>
            <person name="Cunnac S."/>
            <person name="Demange N."/>
            <person name="Gaspin C."/>
            <person name="Lavie M."/>
            <person name="Moisan A."/>
            <person name="Robert C."/>
            <person name="Saurin W."/>
            <person name="Schiex T."/>
            <person name="Siguier P."/>
            <person name="Thebault P."/>
            <person name="Whalen M."/>
            <person name="Wincker P."/>
            <person name="Levy M."/>
            <person name="Weissenbach J."/>
            <person name="Boucher C.A."/>
        </authorList>
    </citation>
    <scope>NUCLEOTIDE SEQUENCE [LARGE SCALE GENOMIC DNA]</scope>
    <source>
        <strain>ATCC BAA-1114 / GMI1000</strain>
    </source>
</reference>
<feature type="chain" id="PRO_0000358464" description="NADH-quinone oxidoreductase subunit B">
    <location>
        <begin position="1"/>
        <end position="160"/>
    </location>
</feature>
<feature type="binding site" evidence="2">
    <location>
        <position position="37"/>
    </location>
    <ligand>
        <name>[4Fe-4S] cluster</name>
        <dbReference type="ChEBI" id="CHEBI:49883"/>
    </ligand>
</feature>
<feature type="binding site" evidence="2">
    <location>
        <position position="38"/>
    </location>
    <ligand>
        <name>[4Fe-4S] cluster</name>
        <dbReference type="ChEBI" id="CHEBI:49883"/>
    </ligand>
</feature>
<feature type="binding site" evidence="2">
    <location>
        <position position="102"/>
    </location>
    <ligand>
        <name>[4Fe-4S] cluster</name>
        <dbReference type="ChEBI" id="CHEBI:49883"/>
    </ligand>
</feature>
<feature type="binding site" evidence="2">
    <location>
        <position position="132"/>
    </location>
    <ligand>
        <name>[4Fe-4S] cluster</name>
        <dbReference type="ChEBI" id="CHEBI:49883"/>
    </ligand>
</feature>
<protein>
    <recommendedName>
        <fullName evidence="2">NADH-quinone oxidoreductase subunit B</fullName>
        <ecNumber evidence="2">7.1.1.-</ecNumber>
    </recommendedName>
    <alternativeName>
        <fullName evidence="2">NADH dehydrogenase I subunit B</fullName>
    </alternativeName>
    <alternativeName>
        <fullName evidence="2">NDH-1 subunit B</fullName>
    </alternativeName>
</protein>
<proteinExistence type="inferred from homology"/>
<name>NUOB_RALN1</name>
<sequence>MAIEGVLNEGFVTTTADKLINWTRTGSLWPMTFGLACCAVEMMHAGASRYDLDRFGVVFRPSPRQSDVMIVAGTLCNKMAPALRKVYDQMAEPRWVISMGSCANGGGYYHYSYSVVRGCDRIVPVDVYVPGCPPTAEALIYGIIQLQAKIRRTNTIARKG</sequence>
<keyword id="KW-0004">4Fe-4S</keyword>
<keyword id="KW-0997">Cell inner membrane</keyword>
<keyword id="KW-1003">Cell membrane</keyword>
<keyword id="KW-0408">Iron</keyword>
<keyword id="KW-0411">Iron-sulfur</keyword>
<keyword id="KW-0472">Membrane</keyword>
<keyword id="KW-0479">Metal-binding</keyword>
<keyword id="KW-0520">NAD</keyword>
<keyword id="KW-0874">Quinone</keyword>
<keyword id="KW-1185">Reference proteome</keyword>
<keyword id="KW-1278">Translocase</keyword>
<keyword id="KW-0813">Transport</keyword>
<keyword id="KW-0830">Ubiquinone</keyword>
<gene>
    <name evidence="2" type="primary">nuoB</name>
    <name type="ordered locus">RSc2061</name>
</gene>
<evidence type="ECO:0000250" key="1"/>
<evidence type="ECO:0000255" key="2">
    <source>
        <dbReference type="HAMAP-Rule" id="MF_01356"/>
    </source>
</evidence>
<accession>Q8XXQ2</accession>